<organism>
    <name type="scientific">Escherichia coli O6:H1 (strain CFT073 / ATCC 700928 / UPEC)</name>
    <dbReference type="NCBI Taxonomy" id="199310"/>
    <lineage>
        <taxon>Bacteria</taxon>
        <taxon>Pseudomonadati</taxon>
        <taxon>Pseudomonadota</taxon>
        <taxon>Gammaproteobacteria</taxon>
        <taxon>Enterobacterales</taxon>
        <taxon>Enterobacteriaceae</taxon>
        <taxon>Escherichia</taxon>
    </lineage>
</organism>
<comment type="function">
    <text evidence="1">Releases the terminal D-alanine residue from the cytoplasmic tetrapeptide recycling product L-Ala-gamma-D-Glu-meso-Dap-D-Ala. Can also cleave D-Ala from murein derivatives containing the tetrapeptide, i.e. MurNAc-tetrapeptide, UDP-MurNAc-tetrapeptide, GlcNAc-MurNAc-tetrapeptide, and GlcNAc-anhMurNAc-tetrapeptide. Does not act on murein sacculi or cross-linked muropeptides. The tripeptides produced by the LcdA reaction can then be reused as peptidoglycan building blocks; LcdA is thereby involved in murein recycling (By similarity).</text>
</comment>
<comment type="catalytic activity">
    <reaction>
        <text>N-acetyl-D-glucosaminyl-N-acetylmuramoyl-L-alanyl-meso-2,6-diaminoheptanedioyl-D-alanine + H2O = N-acetyl-D-glucosaminyl-N-acetylmuramoyl-L-alanyl-meso-2,6-diaminoheptanedioate + D-alanine</text>
        <dbReference type="Rhea" id="RHEA:48688"/>
        <dbReference type="ChEBI" id="CHEBI:15377"/>
        <dbReference type="ChEBI" id="CHEBI:57416"/>
        <dbReference type="ChEBI" id="CHEBI:233808"/>
        <dbReference type="ChEBI" id="CHEBI:233809"/>
        <dbReference type="EC" id="3.4.17.13"/>
    </reaction>
</comment>
<comment type="pathway">
    <text>Cell wall biogenesis; peptidoglycan recycling.</text>
</comment>
<comment type="subcellular location">
    <subcellularLocation>
        <location evidence="1">Cytoplasm</location>
    </subcellularLocation>
</comment>
<comment type="similarity">
    <text evidence="2">Belongs to the peptidase S66 family.</text>
</comment>
<protein>
    <recommendedName>
        <fullName>Murein tetrapeptide carboxypeptidase</fullName>
        <ecNumber>3.4.17.13</ecNumber>
    </recommendedName>
    <alternativeName>
        <fullName>LD-carboxypeptidase A</fullName>
    </alternativeName>
    <alternativeName>
        <fullName>Muramoyltetrapeptide carboxypeptidase</fullName>
    </alternativeName>
</protein>
<name>LDCA_ECOL6</name>
<reference key="1">
    <citation type="journal article" date="1998" name="Infect. Immun.">
        <title>Genomic analysis of a pathogenicity island in uropathogenic Escherichia coli CFT073: distribution of homologous sequences among isolates from patients with pyelonephritis, cystitis, and catheter-associated bacteriuria and from fecal samples.</title>
        <authorList>
            <person name="Guyer D.M."/>
            <person name="Kao J.-S."/>
            <person name="Mobley H.L.T."/>
        </authorList>
    </citation>
    <scope>NUCLEOTIDE SEQUENCE [GENOMIC DNA]</scope>
    <source>
        <strain>CFT073 / ATCC 700928 / UPEC</strain>
    </source>
</reference>
<reference key="2">
    <citation type="journal article" date="2002" name="Proc. Natl. Acad. Sci. U.S.A.">
        <title>Extensive mosaic structure revealed by the complete genome sequence of uropathogenic Escherichia coli.</title>
        <authorList>
            <person name="Welch R.A."/>
            <person name="Burland V."/>
            <person name="Plunkett G. III"/>
            <person name="Redford P."/>
            <person name="Roesch P."/>
            <person name="Rasko D."/>
            <person name="Buckles E.L."/>
            <person name="Liou S.-R."/>
            <person name="Boutin A."/>
            <person name="Hackett J."/>
            <person name="Stroud D."/>
            <person name="Mayhew G.F."/>
            <person name="Rose D.J."/>
            <person name="Zhou S."/>
            <person name="Schwartz D.C."/>
            <person name="Perna N.T."/>
            <person name="Mobley H.L.T."/>
            <person name="Donnenberg M.S."/>
            <person name="Blattner F.R."/>
        </authorList>
    </citation>
    <scope>NUCLEOTIDE SEQUENCE [LARGE SCALE GENOMIC DNA]</scope>
    <source>
        <strain>CFT073 / ATCC 700928 / UPEC</strain>
    </source>
</reference>
<dbReference type="EC" id="3.4.17.13"/>
<dbReference type="EMBL" id="AF081283">
    <property type="protein sequence ID" value="AAC61707.1"/>
    <property type="molecule type" value="Genomic_DNA"/>
</dbReference>
<dbReference type="EMBL" id="AE014075">
    <property type="protein sequence ID" value="AAN80106.1"/>
    <property type="molecule type" value="Genomic_DNA"/>
</dbReference>
<dbReference type="RefSeq" id="WP_000051575.1">
    <property type="nucleotide sequence ID" value="NZ_CP051263.1"/>
</dbReference>
<dbReference type="SMR" id="P59238"/>
<dbReference type="STRING" id="199310.c1641"/>
<dbReference type="MEROPS" id="S66.002"/>
<dbReference type="KEGG" id="ecc:c1641"/>
<dbReference type="eggNOG" id="COG1619">
    <property type="taxonomic scope" value="Bacteria"/>
</dbReference>
<dbReference type="HOGENOM" id="CLU_034346_0_1_6"/>
<dbReference type="BioCyc" id="ECOL199310:C1641-MONOMER"/>
<dbReference type="UniPathway" id="UPA00544"/>
<dbReference type="Proteomes" id="UP000001410">
    <property type="component" value="Chromosome"/>
</dbReference>
<dbReference type="GO" id="GO:0005737">
    <property type="term" value="C:cytoplasm"/>
    <property type="evidence" value="ECO:0007669"/>
    <property type="project" value="UniProtKB-SubCell"/>
</dbReference>
<dbReference type="GO" id="GO:0106415">
    <property type="term" value="F:muramoyltetrapeptide carboxypeptidase activity"/>
    <property type="evidence" value="ECO:0007669"/>
    <property type="project" value="UniProtKB-EC"/>
</dbReference>
<dbReference type="GO" id="GO:0008236">
    <property type="term" value="F:serine-type peptidase activity"/>
    <property type="evidence" value="ECO:0007669"/>
    <property type="project" value="UniProtKB-KW"/>
</dbReference>
<dbReference type="GO" id="GO:0071555">
    <property type="term" value="P:cell wall organization"/>
    <property type="evidence" value="ECO:0007669"/>
    <property type="project" value="UniProtKB-KW"/>
</dbReference>
<dbReference type="GO" id="GO:0009252">
    <property type="term" value="P:peptidoglycan biosynthetic process"/>
    <property type="evidence" value="ECO:0007669"/>
    <property type="project" value="UniProtKB-KW"/>
</dbReference>
<dbReference type="GO" id="GO:0009254">
    <property type="term" value="P:peptidoglycan turnover"/>
    <property type="evidence" value="ECO:0007669"/>
    <property type="project" value="UniProtKB-UniPathway"/>
</dbReference>
<dbReference type="GO" id="GO:0006508">
    <property type="term" value="P:proteolysis"/>
    <property type="evidence" value="ECO:0007669"/>
    <property type="project" value="UniProtKB-KW"/>
</dbReference>
<dbReference type="GO" id="GO:0008360">
    <property type="term" value="P:regulation of cell shape"/>
    <property type="evidence" value="ECO:0007669"/>
    <property type="project" value="UniProtKB-KW"/>
</dbReference>
<dbReference type="CDD" id="cd07025">
    <property type="entry name" value="Peptidase_S66"/>
    <property type="match status" value="1"/>
</dbReference>
<dbReference type="FunFam" id="3.40.50.10740:FF:000001">
    <property type="entry name" value="Murein tetrapeptide carboxypeptidase"/>
    <property type="match status" value="1"/>
</dbReference>
<dbReference type="FunFam" id="3.50.30.60:FF:000001">
    <property type="entry name" value="Murein tetrapeptide carboxypeptidase"/>
    <property type="match status" value="1"/>
</dbReference>
<dbReference type="Gene3D" id="3.40.50.10740">
    <property type="entry name" value="Class I glutamine amidotransferase-like"/>
    <property type="match status" value="1"/>
</dbReference>
<dbReference type="Gene3D" id="3.50.30.60">
    <property type="entry name" value="LD-carboxypeptidase A C-terminal domain-like"/>
    <property type="match status" value="1"/>
</dbReference>
<dbReference type="InterPro" id="IPR027461">
    <property type="entry name" value="Carboxypeptidase_A_C_sf"/>
</dbReference>
<dbReference type="InterPro" id="IPR029062">
    <property type="entry name" value="Class_I_gatase-like"/>
</dbReference>
<dbReference type="InterPro" id="IPR027478">
    <property type="entry name" value="LdcA_N"/>
</dbReference>
<dbReference type="InterPro" id="IPR040449">
    <property type="entry name" value="Peptidase_S66_N"/>
</dbReference>
<dbReference type="InterPro" id="IPR040921">
    <property type="entry name" value="Peptidase_S66C"/>
</dbReference>
<dbReference type="InterPro" id="IPR003507">
    <property type="entry name" value="S66_fam"/>
</dbReference>
<dbReference type="NCBIfam" id="NF008424">
    <property type="entry name" value="PRK11253.1"/>
    <property type="match status" value="1"/>
</dbReference>
<dbReference type="PANTHER" id="PTHR30237">
    <property type="entry name" value="MURAMOYLTETRAPEPTIDE CARBOXYPEPTIDASE"/>
    <property type="match status" value="1"/>
</dbReference>
<dbReference type="PANTHER" id="PTHR30237:SF2">
    <property type="entry name" value="MUREIN TETRAPEPTIDE CARBOXYPEPTIDASE"/>
    <property type="match status" value="1"/>
</dbReference>
<dbReference type="Pfam" id="PF02016">
    <property type="entry name" value="Peptidase_S66"/>
    <property type="match status" value="1"/>
</dbReference>
<dbReference type="Pfam" id="PF17676">
    <property type="entry name" value="Peptidase_S66C"/>
    <property type="match status" value="1"/>
</dbReference>
<dbReference type="PIRSF" id="PIRSF028757">
    <property type="entry name" value="LD-carboxypeptidase"/>
    <property type="match status" value="1"/>
</dbReference>
<dbReference type="SUPFAM" id="SSF52317">
    <property type="entry name" value="Class I glutamine amidotransferase-like"/>
    <property type="match status" value="1"/>
</dbReference>
<dbReference type="SUPFAM" id="SSF141986">
    <property type="entry name" value="LD-carboxypeptidase A C-terminal domain-like"/>
    <property type="match status" value="1"/>
</dbReference>
<sequence length="304" mass="33547">MSLFHLIAPSGYCIKQHAALRGIQRLTDAGHQVNNVEVIARRCERFAGTETERLEDLNSLARLTTPNTIVLSVRGGYGASRLLADIDWQALVARQQHDPLLICGHSDFTAIQCGLLAQGNVITFSGPMLVANFGADELNAFTEHHFWLALRNKTFTIEWQGEGPTCQTEGTLWGGNLAMLISLIGTPWMPKIENGILVLEDINEHPFRVERMLLQLYHAGILPRQKAIILGSFSGSTPNDYDAGYNLESVYAFLRSRLSIPLITGLDFGHEQRTVTLPLGAHAILNNTQEGTQLTISGHPVLKM</sequence>
<evidence type="ECO:0000250" key="1"/>
<evidence type="ECO:0000305" key="2"/>
<keyword id="KW-0121">Carboxypeptidase</keyword>
<keyword id="KW-0133">Cell shape</keyword>
<keyword id="KW-0961">Cell wall biogenesis/degradation</keyword>
<keyword id="KW-0963">Cytoplasm</keyword>
<keyword id="KW-0378">Hydrolase</keyword>
<keyword id="KW-0573">Peptidoglycan synthesis</keyword>
<keyword id="KW-0645">Protease</keyword>
<keyword id="KW-1185">Reference proteome</keyword>
<keyword id="KW-0720">Serine protease</keyword>
<feature type="chain" id="PRO_0000172838" description="Murein tetrapeptide carboxypeptidase">
    <location>
        <begin position="1"/>
        <end position="304"/>
    </location>
</feature>
<feature type="active site" description="Nucleophile" evidence="1">
    <location>
        <position position="106"/>
    </location>
</feature>
<feature type="active site" description="Charge relay system" evidence="1">
    <location>
        <position position="200"/>
    </location>
</feature>
<feature type="active site" description="Charge relay system" evidence="1">
    <location>
        <position position="270"/>
    </location>
</feature>
<feature type="sequence conflict" description="In Ref. 1; AAC61707." evidence="2" ref="1">
    <original>E</original>
    <variation>K</variation>
    <location>
        <position position="248"/>
    </location>
</feature>
<gene>
    <name type="primary">ldcA</name>
    <name type="ordered locus">c1641</name>
</gene>
<accession>P59238</accession>
<proteinExistence type="inferred from homology"/>